<name>SYDND_BRUA2</name>
<sequence length="595" mass="67255">MHRYRSHTCAALRKTDVGSNVRLSGWVHRVRDHGGILFIDLRDHYGITQIVADPDSPAFKVAETVRGEWVIRVDGEVKARADDAVNTNLPTGEVEIFATEIEVLSPAKELPLPVFGEPDYPEDIRLKYRFLDLRRETLHKNIMSRTKIIAAMRRRMTEIGFNEFSTPILTASSPEGARDFLVPSRIHPGKFYALPQAPQQYKQLLMVAGFDRYFQIAPCFRDEDPRADRLPGEFYQLDLEMSFVTQEEVWETMEPVMRGIFEEFAEGKPVTKVFRRIAYDDAIRTYGSDKPDLRNPIEMQAVTDHFAGSGFKVFANMIANDAKVEVWAIPAKTGGSRAFCDRMNSWAQSEGQPGLGYIFWRKEGDKLEGAGPIAKNIGEERTEAIRKQMGLEDGDACFFVAGLPSKFYKFAGDARTRAGEELNLVDRDRFELAWIIDFPFYEWDEDNKKIDFAHNPFSLPQGGMDALENMDPLEIKAYQYDLVCNGFEIASGSIRNQLPEVMVKAFEKVGLSQQDVEERFGGLYRAFQYGAPPHGGMAAGIDRVIMLLVGAKNLREISLFPMNQQALDLLMGAPSEVSPAQLRDLHVRLAPVQKS</sequence>
<organism>
    <name type="scientific">Brucella abortus (strain 2308)</name>
    <dbReference type="NCBI Taxonomy" id="359391"/>
    <lineage>
        <taxon>Bacteria</taxon>
        <taxon>Pseudomonadati</taxon>
        <taxon>Pseudomonadota</taxon>
        <taxon>Alphaproteobacteria</taxon>
        <taxon>Hyphomicrobiales</taxon>
        <taxon>Brucellaceae</taxon>
        <taxon>Brucella/Ochrobactrum group</taxon>
        <taxon>Brucella</taxon>
    </lineage>
</organism>
<proteinExistence type="inferred from homology"/>
<gene>
    <name evidence="1" type="primary">aspS</name>
    <name type="ordered locus">BAB1_0775</name>
</gene>
<dbReference type="EC" id="6.1.1.23" evidence="1"/>
<dbReference type="EMBL" id="AM040264">
    <property type="protein sequence ID" value="CAJ10731.1"/>
    <property type="molecule type" value="Genomic_DNA"/>
</dbReference>
<dbReference type="RefSeq" id="WP_002963890.1">
    <property type="nucleotide sequence ID" value="NZ_KN046823.1"/>
</dbReference>
<dbReference type="SMR" id="Q2YNA7"/>
<dbReference type="STRING" id="359391.BAB1_0775"/>
<dbReference type="GeneID" id="93016855"/>
<dbReference type="KEGG" id="bmf:BAB1_0775"/>
<dbReference type="PATRIC" id="fig|359391.11.peg.3087"/>
<dbReference type="HOGENOM" id="CLU_014330_3_2_5"/>
<dbReference type="PhylomeDB" id="Q2YNA7"/>
<dbReference type="Proteomes" id="UP000002719">
    <property type="component" value="Chromosome I"/>
</dbReference>
<dbReference type="GO" id="GO:0005737">
    <property type="term" value="C:cytoplasm"/>
    <property type="evidence" value="ECO:0007669"/>
    <property type="project" value="UniProtKB-SubCell"/>
</dbReference>
<dbReference type="GO" id="GO:0004815">
    <property type="term" value="F:aspartate-tRNA ligase activity"/>
    <property type="evidence" value="ECO:0007669"/>
    <property type="project" value="UniProtKB-UniRule"/>
</dbReference>
<dbReference type="GO" id="GO:0050560">
    <property type="term" value="F:aspartate-tRNA(Asn) ligase activity"/>
    <property type="evidence" value="ECO:0007669"/>
    <property type="project" value="UniProtKB-EC"/>
</dbReference>
<dbReference type="GO" id="GO:0005524">
    <property type="term" value="F:ATP binding"/>
    <property type="evidence" value="ECO:0007669"/>
    <property type="project" value="UniProtKB-UniRule"/>
</dbReference>
<dbReference type="GO" id="GO:0003676">
    <property type="term" value="F:nucleic acid binding"/>
    <property type="evidence" value="ECO:0007669"/>
    <property type="project" value="InterPro"/>
</dbReference>
<dbReference type="GO" id="GO:0006422">
    <property type="term" value="P:aspartyl-tRNA aminoacylation"/>
    <property type="evidence" value="ECO:0007669"/>
    <property type="project" value="UniProtKB-UniRule"/>
</dbReference>
<dbReference type="CDD" id="cd00777">
    <property type="entry name" value="AspRS_core"/>
    <property type="match status" value="1"/>
</dbReference>
<dbReference type="CDD" id="cd04317">
    <property type="entry name" value="EcAspRS_like_N"/>
    <property type="match status" value="1"/>
</dbReference>
<dbReference type="Gene3D" id="3.30.930.10">
    <property type="entry name" value="Bira Bifunctional Protein, Domain 2"/>
    <property type="match status" value="1"/>
</dbReference>
<dbReference type="Gene3D" id="3.30.1360.30">
    <property type="entry name" value="GAD-like domain"/>
    <property type="match status" value="1"/>
</dbReference>
<dbReference type="Gene3D" id="2.40.50.140">
    <property type="entry name" value="Nucleic acid-binding proteins"/>
    <property type="match status" value="1"/>
</dbReference>
<dbReference type="HAMAP" id="MF_00044">
    <property type="entry name" value="Asp_tRNA_synth_type1"/>
    <property type="match status" value="1"/>
</dbReference>
<dbReference type="InterPro" id="IPR004364">
    <property type="entry name" value="Aa-tRNA-synt_II"/>
</dbReference>
<dbReference type="InterPro" id="IPR006195">
    <property type="entry name" value="aa-tRNA-synth_II"/>
</dbReference>
<dbReference type="InterPro" id="IPR045864">
    <property type="entry name" value="aa-tRNA-synth_II/BPL/LPL"/>
</dbReference>
<dbReference type="InterPro" id="IPR004524">
    <property type="entry name" value="Asp-tRNA-ligase_1"/>
</dbReference>
<dbReference type="InterPro" id="IPR047089">
    <property type="entry name" value="Asp-tRNA-ligase_1_N"/>
</dbReference>
<dbReference type="InterPro" id="IPR002312">
    <property type="entry name" value="Asp/Asn-tRNA-synth_IIb"/>
</dbReference>
<dbReference type="InterPro" id="IPR047090">
    <property type="entry name" value="AspRS_core"/>
</dbReference>
<dbReference type="InterPro" id="IPR004115">
    <property type="entry name" value="GAD-like_sf"/>
</dbReference>
<dbReference type="InterPro" id="IPR029351">
    <property type="entry name" value="GAD_dom"/>
</dbReference>
<dbReference type="InterPro" id="IPR012340">
    <property type="entry name" value="NA-bd_OB-fold"/>
</dbReference>
<dbReference type="InterPro" id="IPR004365">
    <property type="entry name" value="NA-bd_OB_tRNA"/>
</dbReference>
<dbReference type="NCBIfam" id="TIGR00459">
    <property type="entry name" value="aspS_bact"/>
    <property type="match status" value="1"/>
</dbReference>
<dbReference type="NCBIfam" id="NF001750">
    <property type="entry name" value="PRK00476.1"/>
    <property type="match status" value="1"/>
</dbReference>
<dbReference type="PANTHER" id="PTHR22594:SF5">
    <property type="entry name" value="ASPARTATE--TRNA LIGASE, MITOCHONDRIAL"/>
    <property type="match status" value="1"/>
</dbReference>
<dbReference type="PANTHER" id="PTHR22594">
    <property type="entry name" value="ASPARTYL/LYSYL-TRNA SYNTHETASE"/>
    <property type="match status" value="1"/>
</dbReference>
<dbReference type="Pfam" id="PF02938">
    <property type="entry name" value="GAD"/>
    <property type="match status" value="1"/>
</dbReference>
<dbReference type="Pfam" id="PF00152">
    <property type="entry name" value="tRNA-synt_2"/>
    <property type="match status" value="1"/>
</dbReference>
<dbReference type="Pfam" id="PF01336">
    <property type="entry name" value="tRNA_anti-codon"/>
    <property type="match status" value="1"/>
</dbReference>
<dbReference type="PRINTS" id="PR01042">
    <property type="entry name" value="TRNASYNTHASP"/>
</dbReference>
<dbReference type="SUPFAM" id="SSF55681">
    <property type="entry name" value="Class II aaRS and biotin synthetases"/>
    <property type="match status" value="1"/>
</dbReference>
<dbReference type="SUPFAM" id="SSF55261">
    <property type="entry name" value="GAD domain-like"/>
    <property type="match status" value="1"/>
</dbReference>
<dbReference type="SUPFAM" id="SSF50249">
    <property type="entry name" value="Nucleic acid-binding proteins"/>
    <property type="match status" value="1"/>
</dbReference>
<dbReference type="PROSITE" id="PS50862">
    <property type="entry name" value="AA_TRNA_LIGASE_II"/>
    <property type="match status" value="1"/>
</dbReference>
<comment type="function">
    <text evidence="1">Aspartyl-tRNA synthetase with relaxed tRNA specificity since it is able to aspartylate not only its cognate tRNA(Asp) but also tRNA(Asn). Reaction proceeds in two steps: L-aspartate is first activated by ATP to form Asp-AMP and then transferred to the acceptor end of tRNA(Asp/Asn).</text>
</comment>
<comment type="catalytic activity">
    <reaction evidence="1">
        <text>tRNA(Asx) + L-aspartate + ATP = L-aspartyl-tRNA(Asx) + AMP + diphosphate</text>
        <dbReference type="Rhea" id="RHEA:18349"/>
        <dbReference type="Rhea" id="RHEA-COMP:9710"/>
        <dbReference type="Rhea" id="RHEA-COMP:9711"/>
        <dbReference type="ChEBI" id="CHEBI:29991"/>
        <dbReference type="ChEBI" id="CHEBI:30616"/>
        <dbReference type="ChEBI" id="CHEBI:33019"/>
        <dbReference type="ChEBI" id="CHEBI:78442"/>
        <dbReference type="ChEBI" id="CHEBI:78516"/>
        <dbReference type="ChEBI" id="CHEBI:456215"/>
        <dbReference type="EC" id="6.1.1.23"/>
    </reaction>
</comment>
<comment type="subunit">
    <text evidence="1">Homodimer.</text>
</comment>
<comment type="subcellular location">
    <subcellularLocation>
        <location evidence="1">Cytoplasm</location>
    </subcellularLocation>
</comment>
<comment type="similarity">
    <text evidence="1">Belongs to the class-II aminoacyl-tRNA synthetase family. Type 1 subfamily.</text>
</comment>
<evidence type="ECO:0000255" key="1">
    <source>
        <dbReference type="HAMAP-Rule" id="MF_00044"/>
    </source>
</evidence>
<accession>Q2YNA7</accession>
<keyword id="KW-0030">Aminoacyl-tRNA synthetase</keyword>
<keyword id="KW-0067">ATP-binding</keyword>
<keyword id="KW-0963">Cytoplasm</keyword>
<keyword id="KW-0436">Ligase</keyword>
<keyword id="KW-0547">Nucleotide-binding</keyword>
<keyword id="KW-0648">Protein biosynthesis</keyword>
<keyword id="KW-1185">Reference proteome</keyword>
<feature type="chain" id="PRO_0000235512" description="Aspartate--tRNA(Asp/Asn) ligase">
    <location>
        <begin position="1"/>
        <end position="595"/>
    </location>
</feature>
<feature type="region of interest" description="Aspartate" evidence="1">
    <location>
        <begin position="199"/>
        <end position="202"/>
    </location>
</feature>
<feature type="binding site" evidence="1">
    <location>
        <position position="175"/>
    </location>
    <ligand>
        <name>L-aspartate</name>
        <dbReference type="ChEBI" id="CHEBI:29991"/>
    </ligand>
</feature>
<feature type="binding site" evidence="1">
    <location>
        <begin position="221"/>
        <end position="223"/>
    </location>
    <ligand>
        <name>ATP</name>
        <dbReference type="ChEBI" id="CHEBI:30616"/>
    </ligand>
</feature>
<feature type="binding site" evidence="1">
    <location>
        <position position="221"/>
    </location>
    <ligand>
        <name>L-aspartate</name>
        <dbReference type="ChEBI" id="CHEBI:29991"/>
    </ligand>
</feature>
<feature type="binding site" evidence="1">
    <location>
        <position position="454"/>
    </location>
    <ligand>
        <name>L-aspartate</name>
        <dbReference type="ChEBI" id="CHEBI:29991"/>
    </ligand>
</feature>
<feature type="binding site" evidence="1">
    <location>
        <position position="488"/>
    </location>
    <ligand>
        <name>ATP</name>
        <dbReference type="ChEBI" id="CHEBI:30616"/>
    </ligand>
</feature>
<feature type="binding site" evidence="1">
    <location>
        <position position="495"/>
    </location>
    <ligand>
        <name>L-aspartate</name>
        <dbReference type="ChEBI" id="CHEBI:29991"/>
    </ligand>
</feature>
<feature type="binding site" evidence="1">
    <location>
        <begin position="540"/>
        <end position="543"/>
    </location>
    <ligand>
        <name>ATP</name>
        <dbReference type="ChEBI" id="CHEBI:30616"/>
    </ligand>
</feature>
<feature type="site" description="Important for tRNA non-discrimination" evidence="1">
    <location>
        <position position="33"/>
    </location>
</feature>
<protein>
    <recommendedName>
        <fullName evidence="1">Aspartate--tRNA(Asp/Asn) ligase</fullName>
        <ecNumber evidence="1">6.1.1.23</ecNumber>
    </recommendedName>
    <alternativeName>
        <fullName evidence="1">Aspartyl-tRNA synthetase</fullName>
        <shortName evidence="1">AspRS</shortName>
    </alternativeName>
    <alternativeName>
        <fullName evidence="1">Non-discriminating aspartyl-tRNA synthetase</fullName>
        <shortName evidence="1">ND-AspRS</shortName>
    </alternativeName>
</protein>
<reference key="1">
    <citation type="journal article" date="2005" name="Infect. Immun.">
        <title>Whole-genome analyses of speciation events in pathogenic Brucellae.</title>
        <authorList>
            <person name="Chain P.S."/>
            <person name="Comerci D.J."/>
            <person name="Tolmasky M.E."/>
            <person name="Larimer F.W."/>
            <person name="Malfatti S.A."/>
            <person name="Vergez L.M."/>
            <person name="Aguero F."/>
            <person name="Land M.L."/>
            <person name="Ugalde R.A."/>
            <person name="Garcia E."/>
        </authorList>
    </citation>
    <scope>NUCLEOTIDE SEQUENCE [LARGE SCALE GENOMIC DNA]</scope>
    <source>
        <strain>2308</strain>
    </source>
</reference>